<reference key="1">
    <citation type="journal article" date="2004" name="Proc. Natl. Acad. Sci. U.S.A.">
        <title>Complete genomes of two clinical Staphylococcus aureus strains: evidence for the rapid evolution of virulence and drug resistance.</title>
        <authorList>
            <person name="Holden M.T.G."/>
            <person name="Feil E.J."/>
            <person name="Lindsay J.A."/>
            <person name="Peacock S.J."/>
            <person name="Day N.P.J."/>
            <person name="Enright M.C."/>
            <person name="Foster T.J."/>
            <person name="Moore C.E."/>
            <person name="Hurst L."/>
            <person name="Atkin R."/>
            <person name="Barron A."/>
            <person name="Bason N."/>
            <person name="Bentley S.D."/>
            <person name="Chillingworth C."/>
            <person name="Chillingworth T."/>
            <person name="Churcher C."/>
            <person name="Clark L."/>
            <person name="Corton C."/>
            <person name="Cronin A."/>
            <person name="Doggett J."/>
            <person name="Dowd L."/>
            <person name="Feltwell T."/>
            <person name="Hance Z."/>
            <person name="Harris B."/>
            <person name="Hauser H."/>
            <person name="Holroyd S."/>
            <person name="Jagels K."/>
            <person name="James K.D."/>
            <person name="Lennard N."/>
            <person name="Line A."/>
            <person name="Mayes R."/>
            <person name="Moule S."/>
            <person name="Mungall K."/>
            <person name="Ormond D."/>
            <person name="Quail M.A."/>
            <person name="Rabbinowitsch E."/>
            <person name="Rutherford K.M."/>
            <person name="Sanders M."/>
            <person name="Sharp S."/>
            <person name="Simmonds M."/>
            <person name="Stevens K."/>
            <person name="Whitehead S."/>
            <person name="Barrell B.G."/>
            <person name="Spratt B.G."/>
            <person name="Parkhill J."/>
        </authorList>
    </citation>
    <scope>NUCLEOTIDE SEQUENCE [LARGE SCALE GENOMIC DNA]</scope>
    <source>
        <strain>MRSA252</strain>
    </source>
</reference>
<name>SBI_STAAR</name>
<comment type="function">
    <text evidence="1">Plays a role in the inhibition of both the innate and adaptive immune responses. Possesses two N-terminal domains that bind the Fc region of IgG and two domains that form a tripartite complex with complement factors C3b and CFH. By recruiting CFH and C3b, the secreted form acts as a potent complement inhibitor of the alternative pathway-mediated lysis.</text>
</comment>
<comment type="subunit">
    <text evidence="1 2">Interacts (via sbi-I and sbi-II domains) with the Fc region of mammalian immunoglobulin G (IgG) proteins. Interacts (via sbi-III and sbi-IV domains) with host complement C3. Interacts (via sbi-III and sbi-IV domains) with host CFH (By similarity). Interacts (via sbi-IV domain) with beta-2-glycoprotein 1/APOH (By similarity).</text>
</comment>
<comment type="subcellular location">
    <subcellularLocation>
        <location evidence="1">Secreted</location>
    </subcellularLocation>
    <subcellularLocation>
        <location evidence="1">Cell membrane</location>
    </subcellularLocation>
    <text evidence="1">Occurs both extracellularly and associated with the cytoplasmic membrane where only the domains I and II are exposed to the extracellular media. Membrane association occurs via binding to lipoteichoic acid.</text>
</comment>
<comment type="domain">
    <text evidence="1">Sbi-I and sbi-II domains provide protection only when anchored to the cell surface, whereas only the secreted sbi-III and sbi-IV domains are biologically active.</text>
</comment>
<comment type="similarity">
    <text evidence="5">Belongs to the immunoglobulin-binding protein Sbi family.</text>
</comment>
<accession>Q6GE15</accession>
<keyword id="KW-1003">Cell membrane</keyword>
<keyword id="KW-0390">IgG-binding protein</keyword>
<keyword id="KW-0472">Membrane</keyword>
<keyword id="KW-0677">Repeat</keyword>
<keyword id="KW-0964">Secreted</keyword>
<keyword id="KW-0732">Signal</keyword>
<keyword id="KW-0843">Virulence</keyword>
<organism>
    <name type="scientific">Staphylococcus aureus (strain MRSA252)</name>
    <dbReference type="NCBI Taxonomy" id="282458"/>
    <lineage>
        <taxon>Bacteria</taxon>
        <taxon>Bacillati</taxon>
        <taxon>Bacillota</taxon>
        <taxon>Bacilli</taxon>
        <taxon>Bacillales</taxon>
        <taxon>Staphylococcaceae</taxon>
        <taxon>Staphylococcus</taxon>
    </lineage>
</organism>
<evidence type="ECO:0000250" key="1">
    <source>
        <dbReference type="UniProtKB" id="A6QJQ7"/>
    </source>
</evidence>
<evidence type="ECO:0000250" key="2">
    <source>
        <dbReference type="UniProtKB" id="Q931F4"/>
    </source>
</evidence>
<evidence type="ECO:0000255" key="3"/>
<evidence type="ECO:0000256" key="4">
    <source>
        <dbReference type="SAM" id="MobiDB-lite"/>
    </source>
</evidence>
<evidence type="ECO:0000305" key="5"/>
<sequence length="437" mass="50192">MKNKYISKLLVGAATITLATMISNGEAKASENTQQTSTKHQTTQNNYVTDQQKAFYQVLHLKGITEEQRNQYIKTLREHPERAQEVFSESLKDSKNPDRRVAQQNAFYNVLKNDNLTEQEKNNYIAQIKENPDRSQQVWVESVQSSKAKERQNIENADKAIKDFQDNKAPHDKSAAYEANSKLPKDLRDKNNRFVEKVSIEKAIVRHDERVKSANDAISKLNEKDSIENRRLAQREVNKAPMDVQKHLQKQLDALVAQKDAEKKVAPKVEAPQIQSPQIEKPKAESPKVEVPQIQSPKVEVPQSKLLGYYQSLKDSFNYGYKYLTDTYKSYKEKYDTAKYYYNKYYQYKGLIDKTVLTTIGSGYGSYIKPLEVSKESGNLAKSYAQVRNYVTESINTGKVLYAFYQKPELVKTAIKAQETATTFKNALTGIFKSFWK</sequence>
<dbReference type="EMBL" id="BX571856">
    <property type="protein sequence ID" value="CAG41488.1"/>
    <property type="molecule type" value="Genomic_DNA"/>
</dbReference>
<dbReference type="RefSeq" id="WP_000792567.1">
    <property type="nucleotide sequence ID" value="NC_002952.2"/>
</dbReference>
<dbReference type="SMR" id="Q6GE15"/>
<dbReference type="KEGG" id="sar:SAR2508"/>
<dbReference type="HOGENOM" id="CLU_051343_0_0_9"/>
<dbReference type="PRO" id="PR:Q6GE15"/>
<dbReference type="Proteomes" id="UP000000596">
    <property type="component" value="Chromosome"/>
</dbReference>
<dbReference type="GO" id="GO:0005576">
    <property type="term" value="C:extracellular region"/>
    <property type="evidence" value="ECO:0007669"/>
    <property type="project" value="UniProtKB-SubCell"/>
</dbReference>
<dbReference type="GO" id="GO:0005886">
    <property type="term" value="C:plasma membrane"/>
    <property type="evidence" value="ECO:0007669"/>
    <property type="project" value="UniProtKB-SubCell"/>
</dbReference>
<dbReference type="GO" id="GO:0019864">
    <property type="term" value="F:IgG binding"/>
    <property type="evidence" value="ECO:0007669"/>
    <property type="project" value="UniProtKB-KW"/>
</dbReference>
<dbReference type="Gene3D" id="1.20.5.420">
    <property type="entry name" value="Immunoglobulin FC, subunit C"/>
    <property type="match status" value="2"/>
</dbReference>
<dbReference type="Gene3D" id="1.10.10.1270">
    <property type="entry name" value="Sbi, C3 binding domain IV"/>
    <property type="match status" value="1"/>
</dbReference>
<dbReference type="InterPro" id="IPR009063">
    <property type="entry name" value="Ig/albumin-bd_sf"/>
</dbReference>
<dbReference type="InterPro" id="IPR021657">
    <property type="entry name" value="IgG-binding_Sbi_dom_IV"/>
</dbReference>
<dbReference type="InterPro" id="IPR003132">
    <property type="entry name" value="Protein_A_Ig-bd"/>
</dbReference>
<dbReference type="InterPro" id="IPR041909">
    <property type="entry name" value="Sbi_C3_db_domIV"/>
</dbReference>
<dbReference type="Pfam" id="PF02216">
    <property type="entry name" value="B"/>
    <property type="match status" value="2"/>
</dbReference>
<dbReference type="Pfam" id="PF11621">
    <property type="entry name" value="Sbi-IV"/>
    <property type="match status" value="1"/>
</dbReference>
<dbReference type="SUPFAM" id="SSF46997">
    <property type="entry name" value="Bacterial immunoglobulin/albumin-binding domains"/>
    <property type="match status" value="2"/>
</dbReference>
<protein>
    <recommendedName>
        <fullName>Immunoglobulin-binding protein Sbi</fullName>
    </recommendedName>
</protein>
<proteinExistence type="inferred from homology"/>
<gene>
    <name type="primary">sbi</name>
    <name type="ordered locus">SAR2508</name>
</gene>
<feature type="signal peptide" evidence="3">
    <location>
        <begin position="1"/>
        <end position="29"/>
    </location>
</feature>
<feature type="chain" id="PRO_0000361888" description="Immunoglobulin-binding protein Sbi">
    <location>
        <begin position="30"/>
        <end position="437"/>
    </location>
</feature>
<feature type="repeat" description="B 1">
    <location>
        <begin position="43"/>
        <end position="94"/>
    </location>
</feature>
<feature type="repeat" description="B 2">
    <location>
        <begin position="95"/>
        <end position="148"/>
    </location>
</feature>
<feature type="repeat" description="2-1">
    <location>
        <begin position="267"/>
        <end position="271"/>
    </location>
</feature>
<feature type="repeat" description="2-2">
    <location>
        <begin position="272"/>
        <end position="276"/>
    </location>
</feature>
<feature type="repeat" description="2-3">
    <location>
        <begin position="277"/>
        <end position="281"/>
    </location>
</feature>
<feature type="repeat" description="2-4">
    <location>
        <begin position="282"/>
        <end position="286"/>
    </location>
</feature>
<feature type="repeat" description="2-5">
    <location>
        <begin position="287"/>
        <end position="291"/>
    </location>
</feature>
<feature type="repeat" description="2-6">
    <location>
        <begin position="292"/>
        <end position="296"/>
    </location>
</feature>
<feature type="repeat" description="2-7">
    <location>
        <begin position="297"/>
        <end position="301"/>
    </location>
</feature>
<feature type="repeat" description="2-8">
    <location>
        <begin position="302"/>
        <end position="306"/>
    </location>
</feature>
<feature type="region of interest" description="Sbi-I">
    <location>
        <begin position="42"/>
        <end position="94"/>
    </location>
</feature>
<feature type="region of interest" description="Sbi-II">
    <location>
        <begin position="103"/>
        <end position="153"/>
    </location>
</feature>
<feature type="region of interest" description="Sbi-III">
    <location>
        <begin position="154"/>
        <end position="195"/>
    </location>
</feature>
<feature type="region of interest" description="Sbi-IV">
    <location>
        <begin position="196"/>
        <end position="253"/>
    </location>
</feature>
<feature type="region of interest" description="Disordered" evidence="4">
    <location>
        <begin position="266"/>
        <end position="295"/>
    </location>
</feature>
<feature type="region of interest" description="8 X 5 AA tandem repeat of P-[KQ]-[AISV]-[EKQ]-[AKLSV]">
    <location>
        <begin position="267"/>
        <end position="306"/>
    </location>
</feature>